<gene>
    <name type="primary">Slco1a6</name>
    <name type="synonym">Oatp5</name>
    <name type="synonym">Slc21a13</name>
</gene>
<organism>
    <name type="scientific">Mus musculus</name>
    <name type="common">Mouse</name>
    <dbReference type="NCBI Taxonomy" id="10090"/>
    <lineage>
        <taxon>Eukaryota</taxon>
        <taxon>Metazoa</taxon>
        <taxon>Chordata</taxon>
        <taxon>Craniata</taxon>
        <taxon>Vertebrata</taxon>
        <taxon>Euteleostomi</taxon>
        <taxon>Mammalia</taxon>
        <taxon>Eutheria</taxon>
        <taxon>Euarchontoglires</taxon>
        <taxon>Glires</taxon>
        <taxon>Rodentia</taxon>
        <taxon>Myomorpha</taxon>
        <taxon>Muroidea</taxon>
        <taxon>Muridae</taxon>
        <taxon>Murinae</taxon>
        <taxon>Mus</taxon>
        <taxon>Mus</taxon>
    </lineage>
</organism>
<evidence type="ECO:0000255" key="1"/>
<evidence type="ECO:0000255" key="2">
    <source>
        <dbReference type="PROSITE-ProRule" id="PRU00798"/>
    </source>
</evidence>
<evidence type="ECO:0000256" key="3">
    <source>
        <dbReference type="SAM" id="MobiDB-lite"/>
    </source>
</evidence>
<evidence type="ECO:0000305" key="4"/>
<evidence type="ECO:0007744" key="5">
    <source>
    </source>
</evidence>
<proteinExistence type="evidence at protein level"/>
<sequence length="670" mass="74145">MGEPGKRVGIHRVRCFAKIKVFLLALIWAYISKILSGVYMSTMLTQLERQFNISTSIVGLINGSFEMGNLLVIVFVSYFGTKLHRPIMIGVGCAVMGLGCFIISLPHFLMGRYEYETTISPTSNLSSNSFLCVENRSQTLKPTQDPAECVKEIKSLMWIYVLVGNIIRGIGETPIMPLGISYIEDFAKSENSPLYIGILEVGKMIGPILGYLMGPFCANIYVDTGSVNTDDLTITPTDTRWVGAWWIGFLVCAGVNVLTSIPFFFFPKTLPKEGLQDNGDGTENAKEEKHRDKAKEENQGIIKEFFLMMKNLFCNPIYMLCVLTSVLQVNGVANIVIYKPKYLEHHFGISTAKAVFLIGLYTTPSVSAGYLISGFIMKKLKITLKKAAIIALCLFMSECLLSLCNFMLTCDTTPIAGLTTSYEGIQQSFDMENKFLSDCNTRCNCLTKTWDPVCGNNGLAYMSPCLAGCEKSVGTGANMVFQNCSCIRSSGNSSAVLGLCKKGPDCANKLQYFLIITVFCCFFYSLATIPGYMVFLRCMKSEEKSLGIGLQAFFMRLFAGIPAPIYFGALIDRTCLHWGTLKCGEPGACRTYEVSSFRRLYLGLPAALRGSIILPSFFILRLIRKLQIPGDTDSSEIELAETKPTEKESECTDMHKSSKVENDGELKTKL</sequence>
<feature type="chain" id="PRO_0000191048" description="Solute carrier organic anion transporter family member 1A6">
    <location>
        <begin position="1"/>
        <end position="670"/>
    </location>
</feature>
<feature type="topological domain" description="Cytoplasmic" evidence="1">
    <location>
        <begin position="1"/>
        <end position="20"/>
    </location>
</feature>
<feature type="transmembrane region" description="Helical; Name=1" evidence="1">
    <location>
        <begin position="21"/>
        <end position="40"/>
    </location>
</feature>
<feature type="topological domain" description="Extracellular" evidence="1">
    <location>
        <begin position="41"/>
        <end position="59"/>
    </location>
</feature>
<feature type="transmembrane region" description="Helical; Name=2" evidence="1">
    <location>
        <begin position="60"/>
        <end position="80"/>
    </location>
</feature>
<feature type="topological domain" description="Cytoplasmic" evidence="1">
    <location>
        <begin position="81"/>
        <end position="86"/>
    </location>
</feature>
<feature type="transmembrane region" description="Helical; Name=3" evidence="1">
    <location>
        <begin position="87"/>
        <end position="111"/>
    </location>
</feature>
<feature type="topological domain" description="Extracellular" evidence="1">
    <location>
        <begin position="112"/>
        <end position="155"/>
    </location>
</feature>
<feature type="transmembrane region" description="Helical; Name=4" evidence="1">
    <location>
        <begin position="156"/>
        <end position="184"/>
    </location>
</feature>
<feature type="topological domain" description="Cytoplasmic" evidence="1">
    <location>
        <begin position="185"/>
        <end position="203"/>
    </location>
</feature>
<feature type="transmembrane region" description="Helical; Name=5" evidence="1">
    <location>
        <begin position="204"/>
        <end position="224"/>
    </location>
</feature>
<feature type="topological domain" description="Extracellular" evidence="1">
    <location>
        <begin position="225"/>
        <end position="242"/>
    </location>
</feature>
<feature type="transmembrane region" description="Helical; Name=6" evidence="1">
    <location>
        <begin position="243"/>
        <end position="267"/>
    </location>
</feature>
<feature type="topological domain" description="Cytoplasmic" evidence="1">
    <location>
        <begin position="268"/>
        <end position="311"/>
    </location>
</feature>
<feature type="transmembrane region" description="Helical; Name=7" evidence="1">
    <location>
        <begin position="312"/>
        <end position="333"/>
    </location>
</feature>
<feature type="topological domain" description="Extracellular" evidence="1">
    <location>
        <begin position="334"/>
        <end position="353"/>
    </location>
</feature>
<feature type="transmembrane region" description="Helical; Name=8" evidence="1">
    <location>
        <begin position="354"/>
        <end position="377"/>
    </location>
</feature>
<feature type="topological domain" description="Cytoplasmic" evidence="1">
    <location>
        <begin position="378"/>
        <end position="381"/>
    </location>
</feature>
<feature type="transmembrane region" description="Helical; Name=9" evidence="1">
    <location>
        <begin position="382"/>
        <end position="405"/>
    </location>
</feature>
<feature type="topological domain" description="Extracellular" evidence="1">
    <location>
        <begin position="406"/>
        <end position="513"/>
    </location>
</feature>
<feature type="transmembrane region" description="Helical; Name=10" evidence="1">
    <location>
        <begin position="514"/>
        <end position="536"/>
    </location>
</feature>
<feature type="topological domain" description="Cytoplasmic" evidence="1">
    <location>
        <begin position="537"/>
        <end position="545"/>
    </location>
</feature>
<feature type="transmembrane region" description="Helical; Name=11" evidence="1">
    <location>
        <begin position="546"/>
        <end position="571"/>
    </location>
</feature>
<feature type="topological domain" description="Extracellular" evidence="1">
    <location>
        <begin position="572"/>
        <end position="605"/>
    </location>
</feature>
<feature type="transmembrane region" description="Helical; Name=12" evidence="1">
    <location>
        <begin position="606"/>
        <end position="623"/>
    </location>
</feature>
<feature type="topological domain" description="Cytoplasmic" evidence="1">
    <location>
        <begin position="624"/>
        <end position="670"/>
    </location>
</feature>
<feature type="domain" description="Kazal-like" evidence="2">
    <location>
        <begin position="433"/>
        <end position="488"/>
    </location>
</feature>
<feature type="region of interest" description="Disordered" evidence="3">
    <location>
        <begin position="633"/>
        <end position="670"/>
    </location>
</feature>
<feature type="compositionally biased region" description="Basic and acidic residues" evidence="3">
    <location>
        <begin position="640"/>
        <end position="670"/>
    </location>
</feature>
<feature type="modified residue" description="Phosphothreonine" evidence="5">
    <location>
        <position position="632"/>
    </location>
</feature>
<feature type="modified residue" description="Phosphoserine" evidence="5">
    <location>
        <position position="634"/>
    </location>
</feature>
<feature type="modified residue" description="Phosphoserine" evidence="5">
    <location>
        <position position="635"/>
    </location>
</feature>
<feature type="glycosylation site" description="N-linked (GlcNAc...) asparagine" evidence="1">
    <location>
        <position position="52"/>
    </location>
</feature>
<feature type="glycosylation site" description="N-linked (GlcNAc...) asparagine" evidence="1">
    <location>
        <position position="124"/>
    </location>
</feature>
<feature type="glycosylation site" description="N-linked (GlcNAc...) asparagine" evidence="1">
    <location>
        <position position="135"/>
    </location>
</feature>
<feature type="glycosylation site" description="N-linked (GlcNAc...) asparagine" evidence="1">
    <location>
        <position position="483"/>
    </location>
</feature>
<feature type="glycosylation site" description="N-linked (GlcNAc...) asparagine" evidence="1">
    <location>
        <position position="492"/>
    </location>
</feature>
<feature type="disulfide bond" evidence="2">
    <location>
        <begin position="439"/>
        <end position="469"/>
    </location>
</feature>
<feature type="disulfide bond" evidence="2">
    <location>
        <begin position="445"/>
        <end position="465"/>
    </location>
</feature>
<feature type="disulfide bond" evidence="2">
    <location>
        <begin position="454"/>
        <end position="486"/>
    </location>
</feature>
<feature type="sequence conflict" description="In Ref. 2; AK015176." evidence="4" ref="2">
    <original>VGTGANM</original>
    <variation>QLPGNSQ</variation>
    <location>
        <begin position="473"/>
        <end position="479"/>
    </location>
</feature>
<feature type="sequence conflict" description="In Ref. 2; AK015176." evidence="4" ref="2">
    <original>Q</original>
    <variation>Y</variation>
    <location>
        <position position="627"/>
    </location>
</feature>
<reference key="1">
    <citation type="journal article" date="2001" name="Biochem. Biophys. Res. Commun.">
        <title>Cloning, expression, and ontogeny of mouse organic anion-transporting polypeptide-5, a kidney-specific organic anion transporter.</title>
        <authorList>
            <person name="Choudhuri S."/>
            <person name="Ogura K."/>
            <person name="Klaassen C.D."/>
        </authorList>
    </citation>
    <scope>NUCLEOTIDE SEQUENCE [MRNA]</scope>
    <source>
        <strain>BALB/cJ</strain>
        <tissue>Kidney</tissue>
    </source>
</reference>
<reference key="2">
    <citation type="journal article" date="2005" name="Science">
        <title>The transcriptional landscape of the mammalian genome.</title>
        <authorList>
            <person name="Carninci P."/>
            <person name="Kasukawa T."/>
            <person name="Katayama S."/>
            <person name="Gough J."/>
            <person name="Frith M.C."/>
            <person name="Maeda N."/>
            <person name="Oyama R."/>
            <person name="Ravasi T."/>
            <person name="Lenhard B."/>
            <person name="Wells C."/>
            <person name="Kodzius R."/>
            <person name="Shimokawa K."/>
            <person name="Bajic V.B."/>
            <person name="Brenner S.E."/>
            <person name="Batalov S."/>
            <person name="Forrest A.R."/>
            <person name="Zavolan M."/>
            <person name="Davis M.J."/>
            <person name="Wilming L.G."/>
            <person name="Aidinis V."/>
            <person name="Allen J.E."/>
            <person name="Ambesi-Impiombato A."/>
            <person name="Apweiler R."/>
            <person name="Aturaliya R.N."/>
            <person name="Bailey T.L."/>
            <person name="Bansal M."/>
            <person name="Baxter L."/>
            <person name="Beisel K.W."/>
            <person name="Bersano T."/>
            <person name="Bono H."/>
            <person name="Chalk A.M."/>
            <person name="Chiu K.P."/>
            <person name="Choudhary V."/>
            <person name="Christoffels A."/>
            <person name="Clutterbuck D.R."/>
            <person name="Crowe M.L."/>
            <person name="Dalla E."/>
            <person name="Dalrymple B.P."/>
            <person name="de Bono B."/>
            <person name="Della Gatta G."/>
            <person name="di Bernardo D."/>
            <person name="Down T."/>
            <person name="Engstrom P."/>
            <person name="Fagiolini M."/>
            <person name="Faulkner G."/>
            <person name="Fletcher C.F."/>
            <person name="Fukushima T."/>
            <person name="Furuno M."/>
            <person name="Futaki S."/>
            <person name="Gariboldi M."/>
            <person name="Georgii-Hemming P."/>
            <person name="Gingeras T.R."/>
            <person name="Gojobori T."/>
            <person name="Green R.E."/>
            <person name="Gustincich S."/>
            <person name="Harbers M."/>
            <person name="Hayashi Y."/>
            <person name="Hensch T.K."/>
            <person name="Hirokawa N."/>
            <person name="Hill D."/>
            <person name="Huminiecki L."/>
            <person name="Iacono M."/>
            <person name="Ikeo K."/>
            <person name="Iwama A."/>
            <person name="Ishikawa T."/>
            <person name="Jakt M."/>
            <person name="Kanapin A."/>
            <person name="Katoh M."/>
            <person name="Kawasawa Y."/>
            <person name="Kelso J."/>
            <person name="Kitamura H."/>
            <person name="Kitano H."/>
            <person name="Kollias G."/>
            <person name="Krishnan S.P."/>
            <person name="Kruger A."/>
            <person name="Kummerfeld S.K."/>
            <person name="Kurochkin I.V."/>
            <person name="Lareau L.F."/>
            <person name="Lazarevic D."/>
            <person name="Lipovich L."/>
            <person name="Liu J."/>
            <person name="Liuni S."/>
            <person name="McWilliam S."/>
            <person name="Madan Babu M."/>
            <person name="Madera M."/>
            <person name="Marchionni L."/>
            <person name="Matsuda H."/>
            <person name="Matsuzawa S."/>
            <person name="Miki H."/>
            <person name="Mignone F."/>
            <person name="Miyake S."/>
            <person name="Morris K."/>
            <person name="Mottagui-Tabar S."/>
            <person name="Mulder N."/>
            <person name="Nakano N."/>
            <person name="Nakauchi H."/>
            <person name="Ng P."/>
            <person name="Nilsson R."/>
            <person name="Nishiguchi S."/>
            <person name="Nishikawa S."/>
            <person name="Nori F."/>
            <person name="Ohara O."/>
            <person name="Okazaki Y."/>
            <person name="Orlando V."/>
            <person name="Pang K.C."/>
            <person name="Pavan W.J."/>
            <person name="Pavesi G."/>
            <person name="Pesole G."/>
            <person name="Petrovsky N."/>
            <person name="Piazza S."/>
            <person name="Reed J."/>
            <person name="Reid J.F."/>
            <person name="Ring B.Z."/>
            <person name="Ringwald M."/>
            <person name="Rost B."/>
            <person name="Ruan Y."/>
            <person name="Salzberg S.L."/>
            <person name="Sandelin A."/>
            <person name="Schneider C."/>
            <person name="Schoenbach C."/>
            <person name="Sekiguchi K."/>
            <person name="Semple C.A."/>
            <person name="Seno S."/>
            <person name="Sessa L."/>
            <person name="Sheng Y."/>
            <person name="Shibata Y."/>
            <person name="Shimada H."/>
            <person name="Shimada K."/>
            <person name="Silva D."/>
            <person name="Sinclair B."/>
            <person name="Sperling S."/>
            <person name="Stupka E."/>
            <person name="Sugiura K."/>
            <person name="Sultana R."/>
            <person name="Takenaka Y."/>
            <person name="Taki K."/>
            <person name="Tammoja K."/>
            <person name="Tan S.L."/>
            <person name="Tang S."/>
            <person name="Taylor M.S."/>
            <person name="Tegner J."/>
            <person name="Teichmann S.A."/>
            <person name="Ueda H.R."/>
            <person name="van Nimwegen E."/>
            <person name="Verardo R."/>
            <person name="Wei C.L."/>
            <person name="Yagi K."/>
            <person name="Yamanishi H."/>
            <person name="Zabarovsky E."/>
            <person name="Zhu S."/>
            <person name="Zimmer A."/>
            <person name="Hide W."/>
            <person name="Bult C."/>
            <person name="Grimmond S.M."/>
            <person name="Teasdale R.D."/>
            <person name="Liu E.T."/>
            <person name="Brusic V."/>
            <person name="Quackenbush J."/>
            <person name="Wahlestedt C."/>
            <person name="Mattick J.S."/>
            <person name="Hume D.A."/>
            <person name="Kai C."/>
            <person name="Sasaki D."/>
            <person name="Tomaru Y."/>
            <person name="Fukuda S."/>
            <person name="Kanamori-Katayama M."/>
            <person name="Suzuki M."/>
            <person name="Aoki J."/>
            <person name="Arakawa T."/>
            <person name="Iida J."/>
            <person name="Imamura K."/>
            <person name="Itoh M."/>
            <person name="Kato T."/>
            <person name="Kawaji H."/>
            <person name="Kawagashira N."/>
            <person name="Kawashima T."/>
            <person name="Kojima M."/>
            <person name="Kondo S."/>
            <person name="Konno H."/>
            <person name="Nakano K."/>
            <person name="Ninomiya N."/>
            <person name="Nishio T."/>
            <person name="Okada M."/>
            <person name="Plessy C."/>
            <person name="Shibata K."/>
            <person name="Shiraki T."/>
            <person name="Suzuki S."/>
            <person name="Tagami M."/>
            <person name="Waki K."/>
            <person name="Watahiki A."/>
            <person name="Okamura-Oho Y."/>
            <person name="Suzuki H."/>
            <person name="Kawai J."/>
            <person name="Hayashizaki Y."/>
        </authorList>
    </citation>
    <scope>NUCLEOTIDE SEQUENCE [LARGE SCALE MRNA]</scope>
    <source>
        <strain>C57BL/6J</strain>
        <tissue>Kidney</tissue>
        <tissue>Testis</tissue>
    </source>
</reference>
<reference key="3">
    <citation type="journal article" date="2010" name="Cell">
        <title>A tissue-specific atlas of mouse protein phosphorylation and expression.</title>
        <authorList>
            <person name="Huttlin E.L."/>
            <person name="Jedrychowski M.P."/>
            <person name="Elias J.E."/>
            <person name="Goswami T."/>
            <person name="Rad R."/>
            <person name="Beausoleil S.A."/>
            <person name="Villen J."/>
            <person name="Haas W."/>
            <person name="Sowa M.E."/>
            <person name="Gygi S.P."/>
        </authorList>
    </citation>
    <scope>PHOSPHORYLATION [LARGE SCALE ANALYSIS] AT THR-632; SER-634 AND SER-635</scope>
    <scope>IDENTIFICATION BY MASS SPECTROMETRY [LARGE SCALE ANALYSIS]</scope>
    <source>
        <tissue>Kidney</tissue>
    </source>
</reference>
<name>SO1A6_MOUSE</name>
<accession>Q99J94</accession>
<accession>Q3UQC6</accession>
<accession>Q9CUP7</accession>
<keyword id="KW-1003">Cell membrane</keyword>
<keyword id="KW-1015">Disulfide bond</keyword>
<keyword id="KW-0325">Glycoprotein</keyword>
<keyword id="KW-0406">Ion transport</keyword>
<keyword id="KW-0472">Membrane</keyword>
<keyword id="KW-0597">Phosphoprotein</keyword>
<keyword id="KW-1185">Reference proteome</keyword>
<keyword id="KW-0812">Transmembrane</keyword>
<keyword id="KW-1133">Transmembrane helix</keyword>
<keyword id="KW-0813">Transport</keyword>
<protein>
    <recommendedName>
        <fullName>Solute carrier organic anion transporter family member 1A6</fullName>
    </recommendedName>
    <alternativeName>
        <fullName>Kidney-specific organic anion-transporting polypeptide 5</fullName>
        <shortName>OATP-5</shortName>
    </alternativeName>
    <alternativeName>
        <fullName>Solute carrier family 21 member 13</fullName>
    </alternativeName>
</protein>
<dbReference type="EMBL" id="AF213260">
    <property type="protein sequence ID" value="AAG60350.1"/>
    <property type="molecule type" value="mRNA"/>
</dbReference>
<dbReference type="EMBL" id="AF203701">
    <property type="protein sequence ID" value="AAG60003.1"/>
    <property type="molecule type" value="mRNA"/>
</dbReference>
<dbReference type="EMBL" id="AK015176">
    <property type="status" value="NOT_ANNOTATED_CDS"/>
    <property type="molecule type" value="mRNA"/>
</dbReference>
<dbReference type="EMBL" id="AK142587">
    <property type="protein sequence ID" value="BAE25116.1"/>
    <property type="molecule type" value="mRNA"/>
</dbReference>
<dbReference type="CCDS" id="CCDS39693.1"/>
<dbReference type="PIR" id="JC7581">
    <property type="entry name" value="JC7581"/>
</dbReference>
<dbReference type="RefSeq" id="NP_001368859.1">
    <property type="nucleotide sequence ID" value="NM_001381930.1"/>
</dbReference>
<dbReference type="RefSeq" id="NP_076207.1">
    <property type="nucleotide sequence ID" value="NM_023718.3"/>
</dbReference>
<dbReference type="RefSeq" id="XP_006507028.1">
    <property type="nucleotide sequence ID" value="XM_006506965.3"/>
</dbReference>
<dbReference type="RefSeq" id="XP_011239889.1">
    <property type="nucleotide sequence ID" value="XM_011241587.2"/>
</dbReference>
<dbReference type="RefSeq" id="XP_017177101.1">
    <property type="nucleotide sequence ID" value="XM_017321612.1"/>
</dbReference>
<dbReference type="SMR" id="Q99J94"/>
<dbReference type="FunCoup" id="Q99J94">
    <property type="interactions" value="271"/>
</dbReference>
<dbReference type="STRING" id="10090.ENSMUSP00000107458"/>
<dbReference type="TCDB" id="2.A.60.1.25">
    <property type="family name" value="the organo anion transporter (oat) family"/>
</dbReference>
<dbReference type="GlyCosmos" id="Q99J94">
    <property type="glycosylation" value="5 sites, No reported glycans"/>
</dbReference>
<dbReference type="GlyGen" id="Q99J94">
    <property type="glycosylation" value="5 sites"/>
</dbReference>
<dbReference type="iPTMnet" id="Q99J94"/>
<dbReference type="PhosphoSitePlus" id="Q99J94"/>
<dbReference type="jPOST" id="Q99J94"/>
<dbReference type="PaxDb" id="10090-ENSMUSP00000107458"/>
<dbReference type="ProteomicsDB" id="261101"/>
<dbReference type="DNASU" id="28254"/>
<dbReference type="Ensembl" id="ENSMUST00000111827.4">
    <property type="protein sequence ID" value="ENSMUSP00000107458.4"/>
    <property type="gene ID" value="ENSMUSG00000079262.4"/>
</dbReference>
<dbReference type="GeneID" id="28254"/>
<dbReference type="KEGG" id="mmu:28254"/>
<dbReference type="UCSC" id="uc009eow.2">
    <property type="organism name" value="mouse"/>
</dbReference>
<dbReference type="AGR" id="MGI:1351906"/>
<dbReference type="CTD" id="28254"/>
<dbReference type="MGI" id="MGI:1351906">
    <property type="gene designation" value="Slco1a6"/>
</dbReference>
<dbReference type="VEuPathDB" id="HostDB:ENSMUSG00000079262"/>
<dbReference type="eggNOG" id="KOG3626">
    <property type="taxonomic scope" value="Eukaryota"/>
</dbReference>
<dbReference type="GeneTree" id="ENSGT01130000278312"/>
<dbReference type="HOGENOM" id="CLU_008954_4_0_1"/>
<dbReference type="InParanoid" id="Q99J94"/>
<dbReference type="OMA" id="FFMGRYN"/>
<dbReference type="OrthoDB" id="5062115at2759"/>
<dbReference type="PhylomeDB" id="Q99J94"/>
<dbReference type="TreeFam" id="TF317540"/>
<dbReference type="BioGRID-ORCS" id="28254">
    <property type="hits" value="0 hits in 80 CRISPR screens"/>
</dbReference>
<dbReference type="ChiTaRS" id="Slco1a6">
    <property type="organism name" value="mouse"/>
</dbReference>
<dbReference type="PRO" id="PR:Q99J94"/>
<dbReference type="Proteomes" id="UP000000589">
    <property type="component" value="Chromosome 6"/>
</dbReference>
<dbReference type="RNAct" id="Q99J94">
    <property type="molecule type" value="protein"/>
</dbReference>
<dbReference type="Bgee" id="ENSMUSG00000079262">
    <property type="expression patterns" value="Expressed in right kidney and 65 other cell types or tissues"/>
</dbReference>
<dbReference type="GO" id="GO:0005886">
    <property type="term" value="C:plasma membrane"/>
    <property type="evidence" value="ECO:0007669"/>
    <property type="project" value="UniProtKB-SubCell"/>
</dbReference>
<dbReference type="GO" id="GO:0022857">
    <property type="term" value="F:transmembrane transporter activity"/>
    <property type="evidence" value="ECO:0007669"/>
    <property type="project" value="InterPro"/>
</dbReference>
<dbReference type="GO" id="GO:0031100">
    <property type="term" value="P:animal organ regeneration"/>
    <property type="evidence" value="ECO:0007669"/>
    <property type="project" value="Ensembl"/>
</dbReference>
<dbReference type="GO" id="GO:0008206">
    <property type="term" value="P:bile acid metabolic process"/>
    <property type="evidence" value="ECO:0000315"/>
    <property type="project" value="MGI"/>
</dbReference>
<dbReference type="GO" id="GO:0042632">
    <property type="term" value="P:cholesterol homeostasis"/>
    <property type="evidence" value="ECO:0000315"/>
    <property type="project" value="MGI"/>
</dbReference>
<dbReference type="GO" id="GO:0042168">
    <property type="term" value="P:heme metabolic process"/>
    <property type="evidence" value="ECO:0000315"/>
    <property type="project" value="MGI"/>
</dbReference>
<dbReference type="GO" id="GO:0006811">
    <property type="term" value="P:monoatomic ion transport"/>
    <property type="evidence" value="ECO:0007669"/>
    <property type="project" value="UniProtKB-KW"/>
</dbReference>
<dbReference type="GO" id="GO:0035264">
    <property type="term" value="P:multicellular organism growth"/>
    <property type="evidence" value="ECO:0000315"/>
    <property type="project" value="MGI"/>
</dbReference>
<dbReference type="GO" id="GO:0009410">
    <property type="term" value="P:response to xenobiotic stimulus"/>
    <property type="evidence" value="ECO:0000315"/>
    <property type="project" value="MGI"/>
</dbReference>
<dbReference type="GO" id="GO:0070328">
    <property type="term" value="P:triglyceride homeostasis"/>
    <property type="evidence" value="ECO:0000315"/>
    <property type="project" value="MGI"/>
</dbReference>
<dbReference type="GO" id="GO:0006805">
    <property type="term" value="P:xenobiotic metabolic process"/>
    <property type="evidence" value="ECO:0000315"/>
    <property type="project" value="MGI"/>
</dbReference>
<dbReference type="FunFam" id="1.20.1250.20:FF:000210">
    <property type="entry name" value="Solute carrier organic anion transporter family member"/>
    <property type="match status" value="1"/>
</dbReference>
<dbReference type="Gene3D" id="1.20.1250.20">
    <property type="entry name" value="MFS general substrate transporter like domains"/>
    <property type="match status" value="1"/>
</dbReference>
<dbReference type="InterPro" id="IPR002350">
    <property type="entry name" value="Kazal_dom"/>
</dbReference>
<dbReference type="InterPro" id="IPR036058">
    <property type="entry name" value="Kazal_dom_sf"/>
</dbReference>
<dbReference type="InterPro" id="IPR020846">
    <property type="entry name" value="MFS_dom"/>
</dbReference>
<dbReference type="InterPro" id="IPR036259">
    <property type="entry name" value="MFS_trans_sf"/>
</dbReference>
<dbReference type="InterPro" id="IPR004156">
    <property type="entry name" value="OATP"/>
</dbReference>
<dbReference type="NCBIfam" id="TIGR00805">
    <property type="entry name" value="oat"/>
    <property type="match status" value="1"/>
</dbReference>
<dbReference type="PANTHER" id="PTHR11388">
    <property type="entry name" value="ORGANIC ANION TRANSPORTER"/>
    <property type="match status" value="1"/>
</dbReference>
<dbReference type="PANTHER" id="PTHR11388:SF84">
    <property type="entry name" value="SOLUTE CARRIER ORGANIC ANION TRANSPORTER FAMILY MEMBER 1A6"/>
    <property type="match status" value="1"/>
</dbReference>
<dbReference type="Pfam" id="PF07648">
    <property type="entry name" value="Kazal_2"/>
    <property type="match status" value="1"/>
</dbReference>
<dbReference type="Pfam" id="PF03137">
    <property type="entry name" value="OATP"/>
    <property type="match status" value="1"/>
</dbReference>
<dbReference type="SUPFAM" id="SSF100895">
    <property type="entry name" value="Kazal-type serine protease inhibitors"/>
    <property type="match status" value="1"/>
</dbReference>
<dbReference type="SUPFAM" id="SSF103473">
    <property type="entry name" value="MFS general substrate transporter"/>
    <property type="match status" value="1"/>
</dbReference>
<dbReference type="PROSITE" id="PS51465">
    <property type="entry name" value="KAZAL_2"/>
    <property type="match status" value="1"/>
</dbReference>
<dbReference type="PROSITE" id="PS50850">
    <property type="entry name" value="MFS"/>
    <property type="match status" value="1"/>
</dbReference>
<comment type="function">
    <text>May mediate the Na(+)-independent transport of organic anions.</text>
</comment>
<comment type="subcellular location">
    <subcellularLocation>
        <location>Cell membrane</location>
        <topology>Multi-pass membrane protein</topology>
    </subcellularLocation>
</comment>
<comment type="tissue specificity">
    <text>Kidney specific.</text>
</comment>
<comment type="developmental stage">
    <text>Not detected at birth and up to day 20. Intermediate levels were detected at day 40 and adult levels were reached at day 60.</text>
</comment>
<comment type="similarity">
    <text evidence="4">Belongs to the organo anion transporter (TC 2.A.60) family.</text>
</comment>